<comment type="function">
    <text evidence="1 4 5">The UBE2V1-UBE2N and UBE2V2-UBE2N heterodimers catalyze the synthesis of non-canonical 'Lys-63'-linked polyubiquitin chains (PubMed:22424771, PubMed:28039360). This type of polyubiquitination does not lead to protein degradation by the proteasome. Mediates transcriptional activation of target genes. Plays a role in the control of progress through the cell cycle and differentiation. Plays a role in the error-free DNA repair pathway and contributes to the survival of cells after DNA damage. Acts together with the E3 ligases, HLTF and SHPRH, in the 'Lys-63'-linked poly-ubiquitination of PCNA upon genotoxic stress, which is required for DNA repair. Appears to act together with E3 ligase RNF5 in the 'Lys-63'-linked polyubiquitination of JKAMP thereby regulating JKAMP function by decreasing its association with components of the proteasome and ERAD. Promotes TRIM5 capsid-specific restriction activity and the UBE2V1-UBE2N heterodimer acts in concert with TRIM5 to generate 'Lys-63'-linked polyubiquitin chains which activate the MAP3K7/TAK1 complex which in turn results in the induction and expression of NF-kappa-B and MAPK-responsive inflammatory genes. Together with RNF135 and UB2V1, catalyzes the RNA-dependent 'Lys-63'-linked polyubiquitination of RIGI to activate the downstream signaling pathway that leads to interferon beta production (PubMed:22424771). UBE2V1-UBE2N together with TRAF3IP2 E3 ubiquitin ligase mediate 'Lys-63'-linked polyubiquitination of TRAF6, a component of IL17A-mediated signaling pathway.</text>
</comment>
<comment type="catalytic activity">
    <reaction evidence="2 3 4 5">
        <text>S-ubiquitinyl-[E1 ubiquitin-activating enzyme]-L-cysteine + [E2 ubiquitin-conjugating enzyme]-L-cysteine = [E1 ubiquitin-activating enzyme]-L-cysteine + S-ubiquitinyl-[E2 ubiquitin-conjugating enzyme]-L-cysteine.</text>
        <dbReference type="EC" id="2.3.2.23"/>
    </reaction>
</comment>
<comment type="activity regulation">
    <text evidence="1 4 5 6 7">Activity is inhibited by binding to OTUB1, which prevents 'Lys-63'-linked polyubiquitination (By similarity). Activity is inhibited by GPS2, leading to prevent 'Lys-63'-linked polyubiquitination (PubMed:22424771, PubMed:28039360, PubMed:28123943, PubMed:29499132).</text>
</comment>
<comment type="pathway">
    <text evidence="2">Protein modification; protein ubiquitination.</text>
</comment>
<comment type="subunit">
    <text evidence="1 4">Heterodimer with UBE2V2 (By similarity). Interacts (UBE2V2-UBE2N heterodimer) with the E3 ligase STUB1 (via the U-box domain); the complex has a specific 'Lys-63'-linked polyubiquitination activity (By similarity). Interacts with RNF8 and RNF168 (By similarity). Interacts with RNF11 (By similarity). Interacts with the E3 ligases, HLTF and SHPRH; the interactions promote the 'Lys-63'-linked polyubiquitination of PCNA upon genotoxic stress and lead to DNA repair (By similarity). Interacts with ARIH2 (via RING-type 2) (By similarity). Interacts with OTUB1; leading to inhibit E2-conjugating activity (By similarity). Interacts with GPS2; leading to inhibit E2-conjugating activity (PubMed:22424771). Interacts with RIGI and RNF135; involved in RIGI ubiquitination and activation (By similarity).</text>
</comment>
<comment type="subcellular location">
    <subcellularLocation>
        <location evidence="1">Nucleus</location>
    </subcellularLocation>
    <subcellularLocation>
        <location evidence="1">Cytoplasm</location>
    </subcellularLocation>
</comment>
<comment type="PTM">
    <text evidence="1">Conjugation to ISG15 impairs formation of the thioester bond with ubiquitin but not interaction with UBE2V2.</text>
</comment>
<comment type="similarity">
    <text evidence="2">Belongs to the ubiquitin-conjugating enzyme family.</text>
</comment>
<comment type="sequence caution" evidence="8">
    <conflict type="frameshift">
        <sequence resource="EMBL-CDS" id="BAE36659"/>
    </conflict>
</comment>
<dbReference type="EC" id="2.3.2.23" evidence="4 5"/>
<dbReference type="EMBL" id="Y09873">
    <property type="protein sequence ID" value="CAA71001.1"/>
    <property type="molecule type" value="mRNA"/>
</dbReference>
<dbReference type="EMBL" id="AY039837">
    <property type="protein sequence ID" value="AAK74128.1"/>
    <property type="molecule type" value="mRNA"/>
</dbReference>
<dbReference type="EMBL" id="AK005302">
    <property type="protein sequence ID" value="BAB23941.1"/>
    <property type="molecule type" value="mRNA"/>
</dbReference>
<dbReference type="EMBL" id="AK005788">
    <property type="protein sequence ID" value="BAB24239.1"/>
    <property type="molecule type" value="mRNA"/>
</dbReference>
<dbReference type="EMBL" id="AK161968">
    <property type="protein sequence ID" value="BAE36659.1"/>
    <property type="status" value="ALT_FRAME"/>
    <property type="molecule type" value="mRNA"/>
</dbReference>
<dbReference type="EMBL" id="BC034898">
    <property type="protein sequence ID" value="AAH34898.3"/>
    <property type="molecule type" value="mRNA"/>
</dbReference>
<dbReference type="EMBL" id="BC067069">
    <property type="protein sequence ID" value="AAH67069.1"/>
    <property type="molecule type" value="mRNA"/>
</dbReference>
<dbReference type="CCDS" id="CCDS48677.1"/>
<dbReference type="RefSeq" id="NP_542127.1">
    <property type="nucleotide sequence ID" value="NM_080560.3"/>
</dbReference>
<dbReference type="BMRB" id="P61089"/>
<dbReference type="SMR" id="P61089"/>
<dbReference type="BioGRID" id="220301">
    <property type="interactions" value="42"/>
</dbReference>
<dbReference type="ComplexPortal" id="CPX-604">
    <property type="entry name" value="UBC13-MMS2 ubiquitin-conjugating enzyme E2 complex"/>
</dbReference>
<dbReference type="ComplexPortal" id="CPX-616">
    <property type="entry name" value="UBC13-UEV1A ubiquitin-conjugating enzyme E2 complex"/>
</dbReference>
<dbReference type="CORUM" id="P61089"/>
<dbReference type="FunCoup" id="P61089">
    <property type="interactions" value="3282"/>
</dbReference>
<dbReference type="IntAct" id="P61089">
    <property type="interactions" value="6"/>
</dbReference>
<dbReference type="STRING" id="10090.ENSMUSP00000096932"/>
<dbReference type="GlyGen" id="P61089">
    <property type="glycosylation" value="1 site, 1 O-linked glycan (1 site)"/>
</dbReference>
<dbReference type="iPTMnet" id="P61089"/>
<dbReference type="PhosphoSitePlus" id="P61089"/>
<dbReference type="SwissPalm" id="P61089"/>
<dbReference type="REPRODUCTION-2DPAGE" id="IPI00165854"/>
<dbReference type="REPRODUCTION-2DPAGE" id="P61089"/>
<dbReference type="CPTAC" id="non-CPTAC-3678"/>
<dbReference type="CPTAC" id="non-CPTAC-3887"/>
<dbReference type="jPOST" id="P61089"/>
<dbReference type="PaxDb" id="10090-ENSMUSP00000096932"/>
<dbReference type="ProteomicsDB" id="297695"/>
<dbReference type="Pumba" id="P61089"/>
<dbReference type="TopDownProteomics" id="P61089"/>
<dbReference type="Antibodypedia" id="1151">
    <property type="antibodies" value="375 antibodies from 39 providers"/>
</dbReference>
<dbReference type="DNASU" id="93765"/>
<dbReference type="Ensembl" id="ENSMUST00000099329.5">
    <property type="protein sequence ID" value="ENSMUSP00000096932.4"/>
    <property type="gene ID" value="ENSMUSG00000074781.6"/>
</dbReference>
<dbReference type="GeneID" id="93765"/>
<dbReference type="KEGG" id="mmu:93765"/>
<dbReference type="UCSC" id="uc007gwm.1">
    <property type="organism name" value="mouse"/>
</dbReference>
<dbReference type="AGR" id="MGI:1934835"/>
<dbReference type="CTD" id="7334"/>
<dbReference type="MGI" id="MGI:1934835">
    <property type="gene designation" value="Ube2n"/>
</dbReference>
<dbReference type="VEuPathDB" id="HostDB:ENSMUSG00000074781"/>
<dbReference type="eggNOG" id="KOG0417">
    <property type="taxonomic scope" value="Eukaryota"/>
</dbReference>
<dbReference type="GeneTree" id="ENSGT00540000070023"/>
<dbReference type="HOGENOM" id="CLU_030988_13_2_1"/>
<dbReference type="InParanoid" id="P61089"/>
<dbReference type="OMA" id="AEPHEDN"/>
<dbReference type="OrthoDB" id="7851174at2759"/>
<dbReference type="PhylomeDB" id="P61089"/>
<dbReference type="TreeFam" id="TF101126"/>
<dbReference type="Reactome" id="R-MMU-1169408">
    <property type="pathway name" value="ISG15 antiviral mechanism"/>
</dbReference>
<dbReference type="Reactome" id="R-MMU-168638">
    <property type="pathway name" value="NOD1/2 Signaling Pathway"/>
</dbReference>
<dbReference type="Reactome" id="R-MMU-202424">
    <property type="pathway name" value="Downstream TCR signaling"/>
</dbReference>
<dbReference type="Reactome" id="R-MMU-2871837">
    <property type="pathway name" value="FCERI mediated NF-kB activation"/>
</dbReference>
<dbReference type="Reactome" id="R-MMU-445989">
    <property type="pathway name" value="TAK1-dependent IKK and NF-kappa-B activation"/>
</dbReference>
<dbReference type="Reactome" id="R-MMU-450302">
    <property type="pathway name" value="activated TAK1 mediates p38 MAPK activation"/>
</dbReference>
<dbReference type="Reactome" id="R-MMU-450321">
    <property type="pathway name" value="JNK (c-Jun kinases) phosphorylation and activation mediated by activated human TAK1"/>
</dbReference>
<dbReference type="Reactome" id="R-MMU-5205685">
    <property type="pathway name" value="PINK1-PRKN Mediated Mitophagy"/>
</dbReference>
<dbReference type="Reactome" id="R-MMU-5607764">
    <property type="pathway name" value="CLEC7A (Dectin-1) signaling"/>
</dbReference>
<dbReference type="Reactome" id="R-MMU-5693565">
    <property type="pathway name" value="Recruitment and ATM-mediated phosphorylation of repair and signaling proteins at DNA double strand breaks"/>
</dbReference>
<dbReference type="Reactome" id="R-MMU-5693571">
    <property type="pathway name" value="Nonhomologous End-Joining (NHEJ)"/>
</dbReference>
<dbReference type="Reactome" id="R-MMU-5693607">
    <property type="pathway name" value="Processing of DNA double-strand break ends"/>
</dbReference>
<dbReference type="Reactome" id="R-MMU-5696395">
    <property type="pathway name" value="Formation of Incision Complex in GG-NER"/>
</dbReference>
<dbReference type="Reactome" id="R-MMU-69473">
    <property type="pathway name" value="G2/M DNA damage checkpoint"/>
</dbReference>
<dbReference type="Reactome" id="R-MMU-8866654">
    <property type="pathway name" value="E3 ubiquitin ligases ubiquitinate target proteins"/>
</dbReference>
<dbReference type="Reactome" id="R-MMU-9020702">
    <property type="pathway name" value="Interleukin-1 signaling"/>
</dbReference>
<dbReference type="Reactome" id="R-MMU-937039">
    <property type="pathway name" value="IRAK1 recruits IKK complex"/>
</dbReference>
<dbReference type="Reactome" id="R-MMU-937041">
    <property type="pathway name" value="IKK complex recruitment mediated by RIP1"/>
</dbReference>
<dbReference type="Reactome" id="R-MMU-9646399">
    <property type="pathway name" value="Aggrephagy"/>
</dbReference>
<dbReference type="Reactome" id="R-MMU-975144">
    <property type="pathway name" value="IRAK1 recruits IKK complex upon TLR7/8 or 9 stimulation"/>
</dbReference>
<dbReference type="Reactome" id="R-MMU-983168">
    <property type="pathway name" value="Antigen processing: Ubiquitination &amp; Proteasome degradation"/>
</dbReference>
<dbReference type="UniPathway" id="UPA00143"/>
<dbReference type="BioGRID-ORCS" id="93765">
    <property type="hits" value="36 hits in 116 CRISPR screens"/>
</dbReference>
<dbReference type="CD-CODE" id="CE726F99">
    <property type="entry name" value="Postsynaptic density"/>
</dbReference>
<dbReference type="ChiTaRS" id="Ube2n">
    <property type="organism name" value="mouse"/>
</dbReference>
<dbReference type="PRO" id="PR:P61089"/>
<dbReference type="Proteomes" id="UP000000589">
    <property type="component" value="Chromosome 10"/>
</dbReference>
<dbReference type="RNAct" id="P61089">
    <property type="molecule type" value="protein"/>
</dbReference>
<dbReference type="Bgee" id="ENSMUSG00000074781">
    <property type="expression patterns" value="Expressed in spermatid and 230 other cell types or tissues"/>
</dbReference>
<dbReference type="ExpressionAtlas" id="P61089">
    <property type="expression patterns" value="baseline and differential"/>
</dbReference>
<dbReference type="GO" id="GO:0005737">
    <property type="term" value="C:cytoplasm"/>
    <property type="evidence" value="ECO:0000250"/>
    <property type="project" value="UniProtKB"/>
</dbReference>
<dbReference type="GO" id="GO:0005829">
    <property type="term" value="C:cytosol"/>
    <property type="evidence" value="ECO:0000266"/>
    <property type="project" value="ComplexPortal"/>
</dbReference>
<dbReference type="GO" id="GO:0005634">
    <property type="term" value="C:nucleus"/>
    <property type="evidence" value="ECO:0000314"/>
    <property type="project" value="MGI"/>
</dbReference>
<dbReference type="GO" id="GO:0032991">
    <property type="term" value="C:protein-containing complex"/>
    <property type="evidence" value="ECO:0000266"/>
    <property type="project" value="MGI"/>
</dbReference>
<dbReference type="GO" id="GO:0031372">
    <property type="term" value="C:UBC13-MMS2 complex"/>
    <property type="evidence" value="ECO:0000250"/>
    <property type="project" value="UniProtKB"/>
</dbReference>
<dbReference type="GO" id="GO:0000151">
    <property type="term" value="C:ubiquitin ligase complex"/>
    <property type="evidence" value="ECO:0000250"/>
    <property type="project" value="UniProtKB"/>
</dbReference>
<dbReference type="GO" id="GO:0005524">
    <property type="term" value="F:ATP binding"/>
    <property type="evidence" value="ECO:0007669"/>
    <property type="project" value="UniProtKB-KW"/>
</dbReference>
<dbReference type="GO" id="GO:0043130">
    <property type="term" value="F:ubiquitin binding"/>
    <property type="evidence" value="ECO:0000250"/>
    <property type="project" value="HGNC-UCL"/>
</dbReference>
<dbReference type="GO" id="GO:0061631">
    <property type="term" value="F:ubiquitin conjugating enzyme activity"/>
    <property type="evidence" value="ECO:0000314"/>
    <property type="project" value="UniProtKB"/>
</dbReference>
<dbReference type="GO" id="GO:0031625">
    <property type="term" value="F:ubiquitin protein ligase binding"/>
    <property type="evidence" value="ECO:0007669"/>
    <property type="project" value="Ensembl"/>
</dbReference>
<dbReference type="GO" id="GO:0097027">
    <property type="term" value="F:ubiquitin-protein transferase activator activity"/>
    <property type="evidence" value="ECO:0000250"/>
    <property type="project" value="HGNC-UCL"/>
</dbReference>
<dbReference type="GO" id="GO:0004842">
    <property type="term" value="F:ubiquitin-protein transferase activity"/>
    <property type="evidence" value="ECO:0000250"/>
    <property type="project" value="UniProtKB"/>
</dbReference>
<dbReference type="GO" id="GO:0140374">
    <property type="term" value="P:antiviral innate immune response"/>
    <property type="evidence" value="ECO:0007669"/>
    <property type="project" value="Ensembl"/>
</dbReference>
<dbReference type="GO" id="GO:0000729">
    <property type="term" value="P:DNA double-strand break processing"/>
    <property type="evidence" value="ECO:0000250"/>
    <property type="project" value="HGNC-UCL"/>
</dbReference>
<dbReference type="GO" id="GO:0000724">
    <property type="term" value="P:double-strand break repair via homologous recombination"/>
    <property type="evidence" value="ECO:0000250"/>
    <property type="project" value="HGNC-UCL"/>
</dbReference>
<dbReference type="GO" id="GO:1904262">
    <property type="term" value="P:negative regulation of TORC1 signaling"/>
    <property type="evidence" value="ECO:0007669"/>
    <property type="project" value="Ensembl"/>
</dbReference>
<dbReference type="GO" id="GO:0043123">
    <property type="term" value="P:positive regulation of canonical NF-kappaB signal transduction"/>
    <property type="evidence" value="ECO:0000250"/>
    <property type="project" value="HGNC-UCL"/>
</dbReference>
<dbReference type="GO" id="GO:0045739">
    <property type="term" value="P:positive regulation of DNA repair"/>
    <property type="evidence" value="ECO:0000250"/>
    <property type="project" value="HGNC-UCL"/>
</dbReference>
<dbReference type="GO" id="GO:2000781">
    <property type="term" value="P:positive regulation of double-strand break repair"/>
    <property type="evidence" value="ECO:0000266"/>
    <property type="project" value="ComplexPortal"/>
</dbReference>
<dbReference type="GO" id="GO:1902533">
    <property type="term" value="P:positive regulation of intracellular signal transduction"/>
    <property type="evidence" value="ECO:0000266"/>
    <property type="project" value="ComplexPortal"/>
</dbReference>
<dbReference type="GO" id="GO:1902523">
    <property type="term" value="P:positive regulation of protein K63-linked ubiquitination"/>
    <property type="evidence" value="ECO:0000266"/>
    <property type="project" value="ComplexPortal"/>
</dbReference>
<dbReference type="GO" id="GO:0006301">
    <property type="term" value="P:postreplication repair"/>
    <property type="evidence" value="ECO:0000250"/>
    <property type="project" value="HGNC-UCL"/>
</dbReference>
<dbReference type="GO" id="GO:0043161">
    <property type="term" value="P:proteasome-mediated ubiquitin-dependent protein catabolic process"/>
    <property type="evidence" value="ECO:0007669"/>
    <property type="project" value="Ensembl"/>
</dbReference>
<dbReference type="GO" id="GO:0070534">
    <property type="term" value="P:protein K63-linked ubiquitination"/>
    <property type="evidence" value="ECO:0000314"/>
    <property type="project" value="UniProtKB"/>
</dbReference>
<dbReference type="GO" id="GO:0006513">
    <property type="term" value="P:protein monoubiquitination"/>
    <property type="evidence" value="ECO:0000250"/>
    <property type="project" value="HGNC-UCL"/>
</dbReference>
<dbReference type="GO" id="GO:0050852">
    <property type="term" value="P:T cell receptor signaling pathway"/>
    <property type="evidence" value="ECO:0000250"/>
    <property type="project" value="HGNC-UCL"/>
</dbReference>
<dbReference type="GO" id="GO:0006511">
    <property type="term" value="P:ubiquitin-dependent protein catabolic process"/>
    <property type="evidence" value="ECO:0000314"/>
    <property type="project" value="MGI"/>
</dbReference>
<dbReference type="CDD" id="cd23813">
    <property type="entry name" value="UBCc_UBE2N"/>
    <property type="match status" value="1"/>
</dbReference>
<dbReference type="FunFam" id="3.10.110.10:FF:000015">
    <property type="entry name" value="Ubiquitin-conjugating enzyme E2 N"/>
    <property type="match status" value="1"/>
</dbReference>
<dbReference type="Gene3D" id="3.10.110.10">
    <property type="entry name" value="Ubiquitin Conjugating Enzyme"/>
    <property type="match status" value="1"/>
</dbReference>
<dbReference type="InterPro" id="IPR000608">
    <property type="entry name" value="UBQ-conjugat_E2_core"/>
</dbReference>
<dbReference type="InterPro" id="IPR023313">
    <property type="entry name" value="UBQ-conjugating_AS"/>
</dbReference>
<dbReference type="InterPro" id="IPR016135">
    <property type="entry name" value="UBQ-conjugating_enzyme/RWD"/>
</dbReference>
<dbReference type="PANTHER" id="PTHR24068">
    <property type="entry name" value="UBIQUITIN-CONJUGATING ENZYME E2"/>
    <property type="match status" value="1"/>
</dbReference>
<dbReference type="Pfam" id="PF00179">
    <property type="entry name" value="UQ_con"/>
    <property type="match status" value="1"/>
</dbReference>
<dbReference type="SMART" id="SM00212">
    <property type="entry name" value="UBCc"/>
    <property type="match status" value="1"/>
</dbReference>
<dbReference type="SUPFAM" id="SSF54495">
    <property type="entry name" value="UBC-like"/>
    <property type="match status" value="1"/>
</dbReference>
<dbReference type="PROSITE" id="PS00183">
    <property type="entry name" value="UBC_1"/>
    <property type="match status" value="1"/>
</dbReference>
<dbReference type="PROSITE" id="PS50127">
    <property type="entry name" value="UBC_2"/>
    <property type="match status" value="1"/>
</dbReference>
<organism>
    <name type="scientific">Mus musculus</name>
    <name type="common">Mouse</name>
    <dbReference type="NCBI Taxonomy" id="10090"/>
    <lineage>
        <taxon>Eukaryota</taxon>
        <taxon>Metazoa</taxon>
        <taxon>Chordata</taxon>
        <taxon>Craniata</taxon>
        <taxon>Vertebrata</taxon>
        <taxon>Euteleostomi</taxon>
        <taxon>Mammalia</taxon>
        <taxon>Eutheria</taxon>
        <taxon>Euarchontoglires</taxon>
        <taxon>Glires</taxon>
        <taxon>Rodentia</taxon>
        <taxon>Myomorpha</taxon>
        <taxon>Muroidea</taxon>
        <taxon>Muridae</taxon>
        <taxon>Murinae</taxon>
        <taxon>Mus</taxon>
        <taxon>Mus</taxon>
    </lineage>
</organism>
<reference key="1">
    <citation type="submission" date="1996-12" db="EMBL/GenBank/DDBJ databases">
        <authorList>
            <person name="Rugarli E.I."/>
            <person name="Valsecchi V."/>
            <person name="Ballabio A."/>
        </authorList>
    </citation>
    <scope>NUCLEOTIDE SEQUENCE [MRNA]</scope>
    <source>
        <strain>ICR X Swiss Webster</strain>
    </source>
</reference>
<reference key="2">
    <citation type="journal article" date="2002" name="Gene">
        <title>Roles of mouse UBC13 in DNA postreplication repair and Lys63-linked ubiquitination.</title>
        <authorList>
            <person name="Ashley C."/>
            <person name="Pastushok L."/>
            <person name="McKenna S."/>
            <person name="Ellison M.J."/>
            <person name="Xiao W."/>
        </authorList>
    </citation>
    <scope>NUCLEOTIDE SEQUENCE [MRNA]</scope>
    <source>
        <strain>BALB/cJ</strain>
        <tissue>B-cell</tissue>
    </source>
</reference>
<reference key="3">
    <citation type="journal article" date="2005" name="Science">
        <title>The transcriptional landscape of the mammalian genome.</title>
        <authorList>
            <person name="Carninci P."/>
            <person name="Kasukawa T."/>
            <person name="Katayama S."/>
            <person name="Gough J."/>
            <person name="Frith M.C."/>
            <person name="Maeda N."/>
            <person name="Oyama R."/>
            <person name="Ravasi T."/>
            <person name="Lenhard B."/>
            <person name="Wells C."/>
            <person name="Kodzius R."/>
            <person name="Shimokawa K."/>
            <person name="Bajic V.B."/>
            <person name="Brenner S.E."/>
            <person name="Batalov S."/>
            <person name="Forrest A.R."/>
            <person name="Zavolan M."/>
            <person name="Davis M.J."/>
            <person name="Wilming L.G."/>
            <person name="Aidinis V."/>
            <person name="Allen J.E."/>
            <person name="Ambesi-Impiombato A."/>
            <person name="Apweiler R."/>
            <person name="Aturaliya R.N."/>
            <person name="Bailey T.L."/>
            <person name="Bansal M."/>
            <person name="Baxter L."/>
            <person name="Beisel K.W."/>
            <person name="Bersano T."/>
            <person name="Bono H."/>
            <person name="Chalk A.M."/>
            <person name="Chiu K.P."/>
            <person name="Choudhary V."/>
            <person name="Christoffels A."/>
            <person name="Clutterbuck D.R."/>
            <person name="Crowe M.L."/>
            <person name="Dalla E."/>
            <person name="Dalrymple B.P."/>
            <person name="de Bono B."/>
            <person name="Della Gatta G."/>
            <person name="di Bernardo D."/>
            <person name="Down T."/>
            <person name="Engstrom P."/>
            <person name="Fagiolini M."/>
            <person name="Faulkner G."/>
            <person name="Fletcher C.F."/>
            <person name="Fukushima T."/>
            <person name="Furuno M."/>
            <person name="Futaki S."/>
            <person name="Gariboldi M."/>
            <person name="Georgii-Hemming P."/>
            <person name="Gingeras T.R."/>
            <person name="Gojobori T."/>
            <person name="Green R.E."/>
            <person name="Gustincich S."/>
            <person name="Harbers M."/>
            <person name="Hayashi Y."/>
            <person name="Hensch T.K."/>
            <person name="Hirokawa N."/>
            <person name="Hill D."/>
            <person name="Huminiecki L."/>
            <person name="Iacono M."/>
            <person name="Ikeo K."/>
            <person name="Iwama A."/>
            <person name="Ishikawa T."/>
            <person name="Jakt M."/>
            <person name="Kanapin A."/>
            <person name="Katoh M."/>
            <person name="Kawasawa Y."/>
            <person name="Kelso J."/>
            <person name="Kitamura H."/>
            <person name="Kitano H."/>
            <person name="Kollias G."/>
            <person name="Krishnan S.P."/>
            <person name="Kruger A."/>
            <person name="Kummerfeld S.K."/>
            <person name="Kurochkin I.V."/>
            <person name="Lareau L.F."/>
            <person name="Lazarevic D."/>
            <person name="Lipovich L."/>
            <person name="Liu J."/>
            <person name="Liuni S."/>
            <person name="McWilliam S."/>
            <person name="Madan Babu M."/>
            <person name="Madera M."/>
            <person name="Marchionni L."/>
            <person name="Matsuda H."/>
            <person name="Matsuzawa S."/>
            <person name="Miki H."/>
            <person name="Mignone F."/>
            <person name="Miyake S."/>
            <person name="Morris K."/>
            <person name="Mottagui-Tabar S."/>
            <person name="Mulder N."/>
            <person name="Nakano N."/>
            <person name="Nakauchi H."/>
            <person name="Ng P."/>
            <person name="Nilsson R."/>
            <person name="Nishiguchi S."/>
            <person name="Nishikawa S."/>
            <person name="Nori F."/>
            <person name="Ohara O."/>
            <person name="Okazaki Y."/>
            <person name="Orlando V."/>
            <person name="Pang K.C."/>
            <person name="Pavan W.J."/>
            <person name="Pavesi G."/>
            <person name="Pesole G."/>
            <person name="Petrovsky N."/>
            <person name="Piazza S."/>
            <person name="Reed J."/>
            <person name="Reid J.F."/>
            <person name="Ring B.Z."/>
            <person name="Ringwald M."/>
            <person name="Rost B."/>
            <person name="Ruan Y."/>
            <person name="Salzberg S.L."/>
            <person name="Sandelin A."/>
            <person name="Schneider C."/>
            <person name="Schoenbach C."/>
            <person name="Sekiguchi K."/>
            <person name="Semple C.A."/>
            <person name="Seno S."/>
            <person name="Sessa L."/>
            <person name="Sheng Y."/>
            <person name="Shibata Y."/>
            <person name="Shimada H."/>
            <person name="Shimada K."/>
            <person name="Silva D."/>
            <person name="Sinclair B."/>
            <person name="Sperling S."/>
            <person name="Stupka E."/>
            <person name="Sugiura K."/>
            <person name="Sultana R."/>
            <person name="Takenaka Y."/>
            <person name="Taki K."/>
            <person name="Tammoja K."/>
            <person name="Tan S.L."/>
            <person name="Tang S."/>
            <person name="Taylor M.S."/>
            <person name="Tegner J."/>
            <person name="Teichmann S.A."/>
            <person name="Ueda H.R."/>
            <person name="van Nimwegen E."/>
            <person name="Verardo R."/>
            <person name="Wei C.L."/>
            <person name="Yagi K."/>
            <person name="Yamanishi H."/>
            <person name="Zabarovsky E."/>
            <person name="Zhu S."/>
            <person name="Zimmer A."/>
            <person name="Hide W."/>
            <person name="Bult C."/>
            <person name="Grimmond S.M."/>
            <person name="Teasdale R.D."/>
            <person name="Liu E.T."/>
            <person name="Brusic V."/>
            <person name="Quackenbush J."/>
            <person name="Wahlestedt C."/>
            <person name="Mattick J.S."/>
            <person name="Hume D.A."/>
            <person name="Kai C."/>
            <person name="Sasaki D."/>
            <person name="Tomaru Y."/>
            <person name="Fukuda S."/>
            <person name="Kanamori-Katayama M."/>
            <person name="Suzuki M."/>
            <person name="Aoki J."/>
            <person name="Arakawa T."/>
            <person name="Iida J."/>
            <person name="Imamura K."/>
            <person name="Itoh M."/>
            <person name="Kato T."/>
            <person name="Kawaji H."/>
            <person name="Kawagashira N."/>
            <person name="Kawashima T."/>
            <person name="Kojima M."/>
            <person name="Kondo S."/>
            <person name="Konno H."/>
            <person name="Nakano K."/>
            <person name="Ninomiya N."/>
            <person name="Nishio T."/>
            <person name="Okada M."/>
            <person name="Plessy C."/>
            <person name="Shibata K."/>
            <person name="Shiraki T."/>
            <person name="Suzuki S."/>
            <person name="Tagami M."/>
            <person name="Waki K."/>
            <person name="Watahiki A."/>
            <person name="Okamura-Oho Y."/>
            <person name="Suzuki H."/>
            <person name="Kawai J."/>
            <person name="Hayashizaki Y."/>
        </authorList>
    </citation>
    <scope>NUCLEOTIDE SEQUENCE [LARGE SCALE MRNA]</scope>
    <source>
        <strain>C57BL/6J</strain>
        <tissue>Cerebellum</tissue>
        <tissue>Olfactory bulb</tissue>
        <tissue>Testis</tissue>
    </source>
</reference>
<reference key="4">
    <citation type="journal article" date="2004" name="Genome Res.">
        <title>The status, quality, and expansion of the NIH full-length cDNA project: the Mammalian Gene Collection (MGC).</title>
        <authorList>
            <consortium name="The MGC Project Team"/>
        </authorList>
    </citation>
    <scope>NUCLEOTIDE SEQUENCE [LARGE SCALE MRNA]</scope>
    <source>
        <strain>C57BL/6J</strain>
        <tissue>Eye</tissue>
        <tissue>Mammary gland</tissue>
    </source>
</reference>
<reference key="5">
    <citation type="submission" date="2007-04" db="UniProtKB">
        <authorList>
            <person name="Lubec G."/>
            <person name="Klug S."/>
            <person name="Kang S.U."/>
        </authorList>
    </citation>
    <scope>PROTEIN SEQUENCE OF 15-24; 34-68; 95-102 AND 131-141</scope>
    <scope>IDENTIFICATION BY MASS SPECTROMETRY</scope>
    <source>
        <strain>C57BL/6J</strain>
        <tissue>Brain</tissue>
        <tissue>Hippocampus</tissue>
    </source>
</reference>
<reference key="6">
    <citation type="journal article" date="2005" name="Mol. Cell">
        <title>Chaperoned ubiquitylation -- crystal structures of the CHIP U box E3 ubiquitin ligase and a CHIP-Ubc13-Uev1a complex.</title>
        <authorList>
            <person name="Zhang M."/>
            <person name="Windheim M."/>
            <person name="Roe S.M."/>
            <person name="Peggie M."/>
            <person name="Cohen P."/>
            <person name="Prodromou C."/>
            <person name="Pearl L.H."/>
        </authorList>
    </citation>
    <scope>INTERACTION WITH STUB1 AND UBE2V1</scope>
</reference>
<reference key="7">
    <citation type="journal article" date="2010" name="Cell">
        <title>A tissue-specific atlas of mouse protein phosphorylation and expression.</title>
        <authorList>
            <person name="Huttlin E.L."/>
            <person name="Jedrychowski M.P."/>
            <person name="Elias J.E."/>
            <person name="Goswami T."/>
            <person name="Rad R."/>
            <person name="Beausoleil S.A."/>
            <person name="Villen J."/>
            <person name="Haas W."/>
            <person name="Sowa M.E."/>
            <person name="Gygi S.P."/>
        </authorList>
    </citation>
    <scope>IDENTIFICATION BY MASS SPECTROMETRY [LARGE SCALE ANALYSIS]</scope>
    <source>
        <tissue>Brain</tissue>
        <tissue>Brown adipose tissue</tissue>
        <tissue>Heart</tissue>
        <tissue>Kidney</tissue>
        <tissue>Liver</tissue>
        <tissue>Lung</tissue>
        <tissue>Pancreas</tissue>
        <tissue>Spleen</tissue>
        <tissue>Testis</tissue>
    </source>
</reference>
<reference key="8">
    <citation type="journal article" date="2012" name="Mol. Cell">
        <title>A protective strategy against hyperinflammatory responses requiring the nontranscriptional actions of GPS2.</title>
        <authorList>
            <person name="Cardamone M.D."/>
            <person name="Krones A."/>
            <person name="Tanasa B."/>
            <person name="Taylor H."/>
            <person name="Ricci L."/>
            <person name="Ohgi K.A."/>
            <person name="Glass C.K."/>
            <person name="Rosenfeld M.G."/>
            <person name="Perissi V."/>
        </authorList>
    </citation>
    <scope>FUNCTION</scope>
    <scope>CATALYTIC ACTIVITY</scope>
    <scope>ACTIVITY REGULATION</scope>
</reference>
<reference key="9">
    <citation type="journal article" date="2017" name="J. Biol. Chem.">
        <title>Inhibition of Ubc13-mediated ubiquitination by GPS2 regulates multiple stages of B Cell development.</title>
        <authorList>
            <person name="Lentucci C."/>
            <person name="Belkina A.C."/>
            <person name="Cederquist C.T."/>
            <person name="Chan M."/>
            <person name="Johnson H.E."/>
            <person name="Prasad S."/>
            <person name="Lopacinski A."/>
            <person name="Nikolajczyk B.S."/>
            <person name="Monti S."/>
            <person name="Snyder-Cappione J."/>
            <person name="Tanasa B."/>
            <person name="Cardamone M.D."/>
            <person name="Perissi V."/>
        </authorList>
    </citation>
    <scope>FUNCTION</scope>
    <scope>CATALYTIC ACTIVITY</scope>
    <scope>ACTIVITY REGULATION</scope>
</reference>
<reference key="10">
    <citation type="journal article" date="2017" name="Mol. Metab.">
        <title>Systemic insulin sensitivity is regulated by GPS2 inhibition of AKT ubiquitination and activation in adipose tissue.</title>
        <authorList>
            <person name="Cederquist C.T."/>
            <person name="Lentucci C."/>
            <person name="Martinez-Calejman C."/>
            <person name="Hayashi V."/>
            <person name="Orofino J."/>
            <person name="Guertin D."/>
            <person name="Fried S.K."/>
            <person name="Lee M.J."/>
            <person name="Cardamone M.D."/>
            <person name="Perissi V."/>
        </authorList>
    </citation>
    <scope>ACTIVITY REGULATION</scope>
</reference>
<reference key="11">
    <citation type="journal article" date="2017" name="Nat. Commun.">
        <title>Ube2D3 and Ube2N are essential for RIG-I-mediated MAVS aggregation in antiviral innate immunity.</title>
        <authorList>
            <person name="Shi Y."/>
            <person name="Yuan B."/>
            <person name="Zhu W."/>
            <person name="Zhang R."/>
            <person name="Li L."/>
            <person name="Hao X."/>
            <person name="Chen S."/>
            <person name="Hou F."/>
        </authorList>
    </citation>
    <scope>FUNCTION</scope>
</reference>
<reference key="12">
    <citation type="journal article" date="2018" name="Mol. Cell">
        <title>Mitochondrial retrograde signaling in mammals is mediated by the transcriptional cofactor GPS2 via direct mitochondria-to-nucleus translocation.</title>
        <authorList>
            <person name="Cardamone M.D."/>
            <person name="Tanasa B."/>
            <person name="Cederquist C.T."/>
            <person name="Huang J."/>
            <person name="Mahdaviani K."/>
            <person name="Li W."/>
            <person name="Rosenfeld M.G."/>
            <person name="Liesa M."/>
            <person name="Perissi V."/>
        </authorList>
    </citation>
    <scope>ACTIVITY REGULATION</scope>
</reference>
<name>UBE2N_MOUSE</name>
<feature type="chain" id="PRO_0000082504" description="Ubiquitin-conjugating enzyme E2 N">
    <location>
        <begin position="1"/>
        <end position="152"/>
    </location>
</feature>
<feature type="domain" description="UBC core" evidence="2">
    <location>
        <begin position="3"/>
        <end position="149"/>
    </location>
</feature>
<feature type="active site" description="Glycyl thioester intermediate" evidence="2">
    <location>
        <position position="87"/>
    </location>
</feature>
<feature type="modified residue" description="N6-acetyllysine" evidence="1">
    <location>
        <position position="82"/>
    </location>
</feature>
<feature type="cross-link" description="Glycyl lysine isopeptide (Lys-Gly) (interchain with G-Cter in ISG15)" evidence="1">
    <location>
        <position position="92"/>
    </location>
</feature>
<feature type="sequence conflict" description="In Ref. 3; BAB24239." evidence="8" ref="3">
    <original>A</original>
    <variation>D</variation>
    <location>
        <position position="114"/>
    </location>
</feature>
<evidence type="ECO:0000250" key="1">
    <source>
        <dbReference type="UniProtKB" id="P61088"/>
    </source>
</evidence>
<evidence type="ECO:0000255" key="2">
    <source>
        <dbReference type="PROSITE-ProRule" id="PRU00388"/>
    </source>
</evidence>
<evidence type="ECO:0000255" key="3">
    <source>
        <dbReference type="PROSITE-ProRule" id="PRU10133"/>
    </source>
</evidence>
<evidence type="ECO:0000269" key="4">
    <source>
    </source>
</evidence>
<evidence type="ECO:0000269" key="5">
    <source>
    </source>
</evidence>
<evidence type="ECO:0000269" key="6">
    <source>
    </source>
</evidence>
<evidence type="ECO:0000269" key="7">
    <source>
    </source>
</evidence>
<evidence type="ECO:0000305" key="8"/>
<protein>
    <recommendedName>
        <fullName>Ubiquitin-conjugating enzyme E2 N</fullName>
        <ecNumber evidence="4 5">2.3.2.23</ecNumber>
    </recommendedName>
    <alternativeName>
        <fullName>Bendless-like ubiquitin-conjugating enzyme</fullName>
    </alternativeName>
    <alternativeName>
        <fullName>E2 ubiquitin-conjugating enzyme N</fullName>
    </alternativeName>
    <alternativeName>
        <fullName>Ubc13</fullName>
    </alternativeName>
    <alternativeName>
        <fullName>Ubiquitin carrier protein N</fullName>
    </alternativeName>
    <alternativeName>
        <fullName>Ubiquitin-protein ligase N</fullName>
    </alternativeName>
</protein>
<keyword id="KW-0007">Acetylation</keyword>
<keyword id="KW-0067">ATP-binding</keyword>
<keyword id="KW-0963">Cytoplasm</keyword>
<keyword id="KW-0903">Direct protein sequencing</keyword>
<keyword id="KW-0227">DNA damage</keyword>
<keyword id="KW-0234">DNA repair</keyword>
<keyword id="KW-1017">Isopeptide bond</keyword>
<keyword id="KW-0547">Nucleotide-binding</keyword>
<keyword id="KW-0539">Nucleus</keyword>
<keyword id="KW-1185">Reference proteome</keyword>
<keyword id="KW-0808">Transferase</keyword>
<keyword id="KW-0832">Ubl conjugation</keyword>
<keyword id="KW-0833">Ubl conjugation pathway</keyword>
<proteinExistence type="evidence at protein level"/>
<gene>
    <name type="primary">Ube2n</name>
    <name type="synonym">Blu</name>
</gene>
<sequence>MAGLPRRIIKETQRLLAEPVPGIKAEPDESNARYFHVVIAGPQDSPFEGGTFKLELFLPEEYPMAAPKVRFMTKIYHPNVDKLGRICLDILKDKWSPALQIRTVLLSIQALLSAPNPDDPLANDVAEQWKTNEAQAIETARAWTRLYAMNNI</sequence>
<accession>P61089</accession>
<accession>Q16781</accession>
<accession>Q3TSL6</accession>
<accession>Q6ZWZ0</accession>
<accession>Q9DAJ6</accession>